<organism>
    <name type="scientific">Syntrophus aciditrophicus (strain SB)</name>
    <dbReference type="NCBI Taxonomy" id="56780"/>
    <lineage>
        <taxon>Bacteria</taxon>
        <taxon>Pseudomonadati</taxon>
        <taxon>Thermodesulfobacteriota</taxon>
        <taxon>Syntrophia</taxon>
        <taxon>Syntrophales</taxon>
        <taxon>Syntrophaceae</taxon>
        <taxon>Syntrophus</taxon>
    </lineage>
</organism>
<feature type="chain" id="PRO_0000396608" description="Lon protease">
    <location>
        <begin position="1"/>
        <end position="790"/>
    </location>
</feature>
<feature type="domain" description="Lon N-terminal" evidence="3">
    <location>
        <begin position="23"/>
        <end position="220"/>
    </location>
</feature>
<feature type="domain" description="Lon proteolytic" evidence="2">
    <location>
        <begin position="608"/>
        <end position="789"/>
    </location>
</feature>
<feature type="active site" evidence="1">
    <location>
        <position position="695"/>
    </location>
</feature>
<feature type="active site" evidence="1">
    <location>
        <position position="738"/>
    </location>
</feature>
<feature type="binding site" evidence="1">
    <location>
        <begin position="372"/>
        <end position="379"/>
    </location>
    <ligand>
        <name>ATP</name>
        <dbReference type="ChEBI" id="CHEBI:30616"/>
    </ligand>
</feature>
<keyword id="KW-0067">ATP-binding</keyword>
<keyword id="KW-0963">Cytoplasm</keyword>
<keyword id="KW-0378">Hydrolase</keyword>
<keyword id="KW-0547">Nucleotide-binding</keyword>
<keyword id="KW-0645">Protease</keyword>
<keyword id="KW-1185">Reference proteome</keyword>
<keyword id="KW-0720">Serine protease</keyword>
<keyword id="KW-0346">Stress response</keyword>
<gene>
    <name evidence="1" type="primary">lon</name>
    <name type="ordered locus">SYNAS_23100</name>
    <name type="ORF">SYN_00783</name>
</gene>
<comment type="function">
    <text evidence="1">ATP-dependent serine protease that mediates the selective degradation of mutant and abnormal proteins as well as certain short-lived regulatory proteins. Required for cellular homeostasis and for survival from DNA damage and developmental changes induced by stress. Degrades polypeptides processively to yield small peptide fragments that are 5 to 10 amino acids long. Binds to DNA in a double-stranded, site-specific manner.</text>
</comment>
<comment type="catalytic activity">
    <reaction evidence="1">
        <text>Hydrolysis of proteins in presence of ATP.</text>
        <dbReference type="EC" id="3.4.21.53"/>
    </reaction>
</comment>
<comment type="subunit">
    <text evidence="1">Homohexamer. Organized in a ring with a central cavity.</text>
</comment>
<comment type="subcellular location">
    <subcellularLocation>
        <location evidence="1">Cytoplasm</location>
    </subcellularLocation>
</comment>
<comment type="induction">
    <text evidence="1">By heat shock.</text>
</comment>
<comment type="similarity">
    <text evidence="1">Belongs to the peptidase S16 family.</text>
</comment>
<sequence>MEVPMPESTINEDSKIFKLPEILPIMPIFHTVAFPKMMFPMDIVGNRFIQLVDEAMAKDRLLGLVLTRKAPSAEGPLCQCEDLHRVGTCVSILKLAKQAGEKAQLVVQGLARFRIVEFLEEEPYIQARVEKIEADILIKDLEIEALMANLSTLFDRVIKLSPFLPQEFAAMAKSIQEPGDLADIIASIVNASVEDKQKILETLDIRQRLREITLIVNHQLEILELGSKIQSQVQEDIDKSQRDFYLRQQLKAIREELGESDENRVEVAEYRKKIEEKMLTEEARKEAFRELDRMSRMHPASAEYSVATTYLDWITSLPWNERTQDNQDIRQARRILDEDHYGLDKAKKRIIEYLAVRKLKPDTKGPILCFVGPPGTGKTSLAQSIARALGRKFYRISLGGVHDEAEIRGHRRTYVGALPGRIIQGIRRAESSNPVFVLDEIDKVGSDFRGDPSSALLEVLDPEQNFAFMDHYLGVAFDLSHVTFITTANILDTIPPALRDRLEVIELPGYTQDEKLRIAERYLIPRQREANGLTPEQIKFTRGAARLIISGYTREAGVRNLEREIAAVCRGVASQIAEGEISSALISARDIHRYLGPVRMISDARERISKPGIAMGLAWTPTGGDLLFVEATAMKGRKGLTLTGQLGEVMKESASAALSFIRSNAVKIGIPVDFFEETDIHIHVPAGAIPKDGPSAGVTMLAALASLLTNRTVKNDLAMTGEITLRGLVLPVGGIKEKVLAAHRAGIKTIILPKWNRKDLEEIPSKVRKEMNFVFVNDMREVLNIALSRK</sequence>
<accession>Q2LVS9</accession>
<evidence type="ECO:0000255" key="1">
    <source>
        <dbReference type="HAMAP-Rule" id="MF_01973"/>
    </source>
</evidence>
<evidence type="ECO:0000255" key="2">
    <source>
        <dbReference type="PROSITE-ProRule" id="PRU01122"/>
    </source>
</evidence>
<evidence type="ECO:0000255" key="3">
    <source>
        <dbReference type="PROSITE-ProRule" id="PRU01123"/>
    </source>
</evidence>
<name>LON_SYNAS</name>
<reference key="1">
    <citation type="journal article" date="2007" name="Proc. Natl. Acad. Sci. U.S.A.">
        <title>The genome of Syntrophus aciditrophicus: life at the thermodynamic limit of microbial growth.</title>
        <authorList>
            <person name="McInerney M.J."/>
            <person name="Rohlin L."/>
            <person name="Mouttaki H."/>
            <person name="Kim U."/>
            <person name="Krupp R.S."/>
            <person name="Rios-Hernandez L."/>
            <person name="Sieber J."/>
            <person name="Struchtemeyer C.G."/>
            <person name="Bhattacharyya A."/>
            <person name="Campbell J.W."/>
            <person name="Gunsalus R.P."/>
        </authorList>
    </citation>
    <scope>NUCLEOTIDE SEQUENCE [LARGE SCALE GENOMIC DNA]</scope>
    <source>
        <strain>SB</strain>
    </source>
</reference>
<dbReference type="EC" id="3.4.21.53" evidence="1"/>
<dbReference type="EMBL" id="CP000252">
    <property type="protein sequence ID" value="ABC78189.1"/>
    <property type="molecule type" value="Genomic_DNA"/>
</dbReference>
<dbReference type="SMR" id="Q2LVS9"/>
<dbReference type="STRING" id="56780.SYN_00783"/>
<dbReference type="KEGG" id="sat:SYN_00783"/>
<dbReference type="eggNOG" id="COG0466">
    <property type="taxonomic scope" value="Bacteria"/>
</dbReference>
<dbReference type="HOGENOM" id="CLU_004109_4_3_7"/>
<dbReference type="InParanoid" id="Q2LVS9"/>
<dbReference type="OrthoDB" id="9803599at2"/>
<dbReference type="Proteomes" id="UP000001933">
    <property type="component" value="Chromosome"/>
</dbReference>
<dbReference type="GO" id="GO:0005737">
    <property type="term" value="C:cytoplasm"/>
    <property type="evidence" value="ECO:0007669"/>
    <property type="project" value="UniProtKB-SubCell"/>
</dbReference>
<dbReference type="GO" id="GO:0005524">
    <property type="term" value="F:ATP binding"/>
    <property type="evidence" value="ECO:0007669"/>
    <property type="project" value="UniProtKB-UniRule"/>
</dbReference>
<dbReference type="GO" id="GO:0016887">
    <property type="term" value="F:ATP hydrolysis activity"/>
    <property type="evidence" value="ECO:0007669"/>
    <property type="project" value="UniProtKB-UniRule"/>
</dbReference>
<dbReference type="GO" id="GO:0004176">
    <property type="term" value="F:ATP-dependent peptidase activity"/>
    <property type="evidence" value="ECO:0007669"/>
    <property type="project" value="UniProtKB-UniRule"/>
</dbReference>
<dbReference type="GO" id="GO:0043565">
    <property type="term" value="F:sequence-specific DNA binding"/>
    <property type="evidence" value="ECO:0007669"/>
    <property type="project" value="UniProtKB-UniRule"/>
</dbReference>
<dbReference type="GO" id="GO:0004252">
    <property type="term" value="F:serine-type endopeptidase activity"/>
    <property type="evidence" value="ECO:0007669"/>
    <property type="project" value="UniProtKB-UniRule"/>
</dbReference>
<dbReference type="GO" id="GO:0034605">
    <property type="term" value="P:cellular response to heat"/>
    <property type="evidence" value="ECO:0007669"/>
    <property type="project" value="UniProtKB-UniRule"/>
</dbReference>
<dbReference type="GO" id="GO:0006515">
    <property type="term" value="P:protein quality control for misfolded or incompletely synthesized proteins"/>
    <property type="evidence" value="ECO:0007669"/>
    <property type="project" value="UniProtKB-UniRule"/>
</dbReference>
<dbReference type="CDD" id="cd19500">
    <property type="entry name" value="RecA-like_Lon"/>
    <property type="match status" value="1"/>
</dbReference>
<dbReference type="FunFam" id="1.20.5.5270:FF:000002">
    <property type="entry name" value="Lon protease homolog"/>
    <property type="match status" value="1"/>
</dbReference>
<dbReference type="FunFam" id="3.30.230.10:FF:000019">
    <property type="entry name" value="Lon protease homolog 2, peroxisomal"/>
    <property type="match status" value="1"/>
</dbReference>
<dbReference type="FunFam" id="3.40.50.300:FF:000382">
    <property type="entry name" value="Lon protease homolog 2, peroxisomal"/>
    <property type="match status" value="1"/>
</dbReference>
<dbReference type="Gene3D" id="1.10.8.60">
    <property type="match status" value="1"/>
</dbReference>
<dbReference type="Gene3D" id="1.20.5.5270">
    <property type="match status" value="1"/>
</dbReference>
<dbReference type="Gene3D" id="1.20.58.1480">
    <property type="match status" value="1"/>
</dbReference>
<dbReference type="Gene3D" id="3.30.230.10">
    <property type="match status" value="1"/>
</dbReference>
<dbReference type="Gene3D" id="2.30.130.40">
    <property type="entry name" value="LON domain-like"/>
    <property type="match status" value="1"/>
</dbReference>
<dbReference type="Gene3D" id="3.40.50.300">
    <property type="entry name" value="P-loop containing nucleotide triphosphate hydrolases"/>
    <property type="match status" value="1"/>
</dbReference>
<dbReference type="HAMAP" id="MF_01973">
    <property type="entry name" value="lon_bact"/>
    <property type="match status" value="1"/>
</dbReference>
<dbReference type="InterPro" id="IPR003593">
    <property type="entry name" value="AAA+_ATPase"/>
</dbReference>
<dbReference type="InterPro" id="IPR003959">
    <property type="entry name" value="ATPase_AAA_core"/>
</dbReference>
<dbReference type="InterPro" id="IPR027543">
    <property type="entry name" value="Lon_bac"/>
</dbReference>
<dbReference type="InterPro" id="IPR004815">
    <property type="entry name" value="Lon_bac/euk-typ"/>
</dbReference>
<dbReference type="InterPro" id="IPR054594">
    <property type="entry name" value="Lon_lid"/>
</dbReference>
<dbReference type="InterPro" id="IPR008269">
    <property type="entry name" value="Lon_proteolytic"/>
</dbReference>
<dbReference type="InterPro" id="IPR027065">
    <property type="entry name" value="Lon_Prtase"/>
</dbReference>
<dbReference type="InterPro" id="IPR003111">
    <property type="entry name" value="Lon_prtase_N"/>
</dbReference>
<dbReference type="InterPro" id="IPR046336">
    <property type="entry name" value="Lon_prtase_N_sf"/>
</dbReference>
<dbReference type="InterPro" id="IPR027417">
    <property type="entry name" value="P-loop_NTPase"/>
</dbReference>
<dbReference type="InterPro" id="IPR008268">
    <property type="entry name" value="Peptidase_S16_AS"/>
</dbReference>
<dbReference type="InterPro" id="IPR015947">
    <property type="entry name" value="PUA-like_sf"/>
</dbReference>
<dbReference type="InterPro" id="IPR020568">
    <property type="entry name" value="Ribosomal_Su5_D2-typ_SF"/>
</dbReference>
<dbReference type="InterPro" id="IPR014721">
    <property type="entry name" value="Ribsml_uS5_D2-typ_fold_subgr"/>
</dbReference>
<dbReference type="NCBIfam" id="TIGR00763">
    <property type="entry name" value="lon"/>
    <property type="match status" value="1"/>
</dbReference>
<dbReference type="PANTHER" id="PTHR10046">
    <property type="entry name" value="ATP DEPENDENT LON PROTEASE FAMILY MEMBER"/>
    <property type="match status" value="1"/>
</dbReference>
<dbReference type="Pfam" id="PF00004">
    <property type="entry name" value="AAA"/>
    <property type="match status" value="1"/>
</dbReference>
<dbReference type="Pfam" id="PF05362">
    <property type="entry name" value="Lon_C"/>
    <property type="match status" value="1"/>
</dbReference>
<dbReference type="Pfam" id="PF22667">
    <property type="entry name" value="Lon_lid"/>
    <property type="match status" value="1"/>
</dbReference>
<dbReference type="Pfam" id="PF02190">
    <property type="entry name" value="LON_substr_bdg"/>
    <property type="match status" value="1"/>
</dbReference>
<dbReference type="PIRSF" id="PIRSF001174">
    <property type="entry name" value="Lon_proteas"/>
    <property type="match status" value="1"/>
</dbReference>
<dbReference type="PRINTS" id="PR00830">
    <property type="entry name" value="ENDOLAPTASE"/>
</dbReference>
<dbReference type="SMART" id="SM00382">
    <property type="entry name" value="AAA"/>
    <property type="match status" value="1"/>
</dbReference>
<dbReference type="SMART" id="SM00464">
    <property type="entry name" value="LON"/>
    <property type="match status" value="1"/>
</dbReference>
<dbReference type="SUPFAM" id="SSF52540">
    <property type="entry name" value="P-loop containing nucleoside triphosphate hydrolases"/>
    <property type="match status" value="1"/>
</dbReference>
<dbReference type="SUPFAM" id="SSF88697">
    <property type="entry name" value="PUA domain-like"/>
    <property type="match status" value="1"/>
</dbReference>
<dbReference type="SUPFAM" id="SSF54211">
    <property type="entry name" value="Ribosomal protein S5 domain 2-like"/>
    <property type="match status" value="1"/>
</dbReference>
<dbReference type="PROSITE" id="PS51787">
    <property type="entry name" value="LON_N"/>
    <property type="match status" value="1"/>
</dbReference>
<dbReference type="PROSITE" id="PS51786">
    <property type="entry name" value="LON_PROTEOLYTIC"/>
    <property type="match status" value="1"/>
</dbReference>
<dbReference type="PROSITE" id="PS01046">
    <property type="entry name" value="LON_SER"/>
    <property type="match status" value="1"/>
</dbReference>
<proteinExistence type="inferred from homology"/>
<protein>
    <recommendedName>
        <fullName evidence="1">Lon protease</fullName>
        <ecNumber evidence="1">3.4.21.53</ecNumber>
    </recommendedName>
    <alternativeName>
        <fullName evidence="1">ATP-dependent protease La</fullName>
    </alternativeName>
</protein>